<name>322R_IIV6</name>
<proteinExistence type="predicted"/>
<dbReference type="EMBL" id="AF303741">
    <property type="protein sequence ID" value="AAK82183.1"/>
    <property type="molecule type" value="Genomic_DNA"/>
</dbReference>
<dbReference type="RefSeq" id="NP_149785.1">
    <property type="nucleotide sequence ID" value="NC_003038.1"/>
</dbReference>
<dbReference type="KEGG" id="vg:1733303"/>
<dbReference type="Proteomes" id="UP000001359">
    <property type="component" value="Genome"/>
</dbReference>
<accession>Q91FK2</accession>
<gene>
    <name type="ORF">IIV6-322R</name>
</gene>
<organismHost>
    <name type="scientific">Acheta domesticus</name>
    <name type="common">House cricket</name>
    <dbReference type="NCBI Taxonomy" id="6997"/>
</organismHost>
<organismHost>
    <name type="scientific">Chilo suppressalis</name>
    <name type="common">Asiatic rice borer moth</name>
    <dbReference type="NCBI Taxonomy" id="168631"/>
</organismHost>
<organismHost>
    <name type="scientific">Gryllus bimaculatus</name>
    <name type="common">Two-spotted cricket</name>
    <dbReference type="NCBI Taxonomy" id="6999"/>
</organismHost>
<organismHost>
    <name type="scientific">Gryllus campestris</name>
    <dbReference type="NCBI Taxonomy" id="58607"/>
</organismHost>
<organismHost>
    <name type="scientific">Spodoptera frugiperda</name>
    <name type="common">Fall armyworm</name>
    <dbReference type="NCBI Taxonomy" id="7108"/>
</organismHost>
<keyword id="KW-1185">Reference proteome</keyword>
<reference key="1">
    <citation type="journal article" date="2001" name="Virology">
        <title>Analysis of the first complete DNA sequence of an invertebrate iridovirus: coding strategy of the genome of Chilo iridescent virus.</title>
        <authorList>
            <person name="Jakob N.J."/>
            <person name="Mueller K."/>
            <person name="Bahr U."/>
            <person name="Darai G."/>
        </authorList>
    </citation>
    <scope>NUCLEOTIDE SEQUENCE [LARGE SCALE GENOMIC DNA]</scope>
</reference>
<reference key="2">
    <citation type="journal article" date="2007" name="Virol. J.">
        <title>Comparative genomic analysis of the family Iridoviridae: re-annotating and defining the core set of iridovirus genes.</title>
        <authorList>
            <person name="Eaton H.E."/>
            <person name="Metcalf J."/>
            <person name="Penny E."/>
            <person name="Tcherepanov V."/>
            <person name="Upton C."/>
            <person name="Brunetti C.R."/>
        </authorList>
    </citation>
    <scope>GENOME REANNOTATION</scope>
</reference>
<feature type="chain" id="PRO_0000377858" description="Uncharacterized protein 322R">
    <location>
        <begin position="1"/>
        <end position="69"/>
    </location>
</feature>
<organism>
    <name type="scientific">Invertebrate iridescent virus 6</name>
    <name type="common">IIV-6</name>
    <name type="synonym">Chilo iridescent virus</name>
    <dbReference type="NCBI Taxonomy" id="176652"/>
    <lineage>
        <taxon>Viruses</taxon>
        <taxon>Varidnaviria</taxon>
        <taxon>Bamfordvirae</taxon>
        <taxon>Nucleocytoviricota</taxon>
        <taxon>Megaviricetes</taxon>
        <taxon>Pimascovirales</taxon>
        <taxon>Iridoviridae</taxon>
        <taxon>Betairidovirinae</taxon>
        <taxon>Iridovirus</taxon>
    </lineage>
</organism>
<protein>
    <recommendedName>
        <fullName>Uncharacterized protein 322R</fullName>
    </recommendedName>
</protein>
<sequence>MMIQKYIKKDCNHGYDNGEYNLLSNDNLIIHYKNYNDALYGESIYSHNSLGVLQNVHAVLSTYYCLKFN</sequence>